<protein>
    <recommendedName>
        <fullName evidence="1">Elongation factor 1-beta</fullName>
        <shortName evidence="1">EF-1-beta</shortName>
    </recommendedName>
    <alternativeName>
        <fullName evidence="1">aEF-1beta</fullName>
    </alternativeName>
</protein>
<evidence type="ECO:0000255" key="1">
    <source>
        <dbReference type="HAMAP-Rule" id="MF_00043"/>
    </source>
</evidence>
<reference key="1">
    <citation type="journal article" date="2008" name="Proc. Natl. Acad. Sci. U.S.A.">
        <title>A korarchaeal genome reveals new insights into the evolution of the Archaea.</title>
        <authorList>
            <person name="Elkins J.G."/>
            <person name="Podar M."/>
            <person name="Graham D.E."/>
            <person name="Makarova K.S."/>
            <person name="Wolf Y."/>
            <person name="Randau L."/>
            <person name="Hedlund B.P."/>
            <person name="Brochier-Armanet C."/>
            <person name="Kunin V."/>
            <person name="Anderson I."/>
            <person name="Lapidus A."/>
            <person name="Goltsman E."/>
            <person name="Barry K."/>
            <person name="Koonin E.V."/>
            <person name="Hugenholtz P."/>
            <person name="Kyrpides N."/>
            <person name="Wanner G."/>
            <person name="Richardson P."/>
            <person name="Keller M."/>
            <person name="Stetter K.O."/>
        </authorList>
    </citation>
    <scope>NUCLEOTIDE SEQUENCE [LARGE SCALE GENOMIC DNA]</scope>
    <source>
        <strain>OPF8</strain>
    </source>
</reference>
<gene>
    <name evidence="1" type="primary">ef1b</name>
    <name type="ordered locus">Kcr_1400</name>
</gene>
<keyword id="KW-0251">Elongation factor</keyword>
<keyword id="KW-0648">Protein biosynthesis</keyword>
<keyword id="KW-1185">Reference proteome</keyword>
<feature type="chain" id="PRO_0000366422" description="Elongation factor 1-beta">
    <location>
        <begin position="1"/>
        <end position="92"/>
    </location>
</feature>
<dbReference type="EMBL" id="CP000968">
    <property type="protein sequence ID" value="ACB08146.1"/>
    <property type="molecule type" value="Genomic_DNA"/>
</dbReference>
<dbReference type="SMR" id="B1L6R7"/>
<dbReference type="STRING" id="374847.Kcr_1400"/>
<dbReference type="EnsemblBacteria" id="ACB08146">
    <property type="protein sequence ID" value="ACB08146"/>
    <property type="gene ID" value="Kcr_1400"/>
</dbReference>
<dbReference type="KEGG" id="kcr:Kcr_1400"/>
<dbReference type="eggNOG" id="arCOG01988">
    <property type="taxonomic scope" value="Archaea"/>
</dbReference>
<dbReference type="HOGENOM" id="CLU_165896_1_0_2"/>
<dbReference type="InParanoid" id="B1L6R7"/>
<dbReference type="Proteomes" id="UP000001686">
    <property type="component" value="Chromosome"/>
</dbReference>
<dbReference type="GO" id="GO:0003746">
    <property type="term" value="F:translation elongation factor activity"/>
    <property type="evidence" value="ECO:0007669"/>
    <property type="project" value="UniProtKB-UniRule"/>
</dbReference>
<dbReference type="Gene3D" id="3.30.70.60">
    <property type="match status" value="1"/>
</dbReference>
<dbReference type="HAMAP" id="MF_00043">
    <property type="entry name" value="EF1_beta"/>
    <property type="match status" value="1"/>
</dbReference>
<dbReference type="InterPro" id="IPR036219">
    <property type="entry name" value="eEF-1beta-like_sf"/>
</dbReference>
<dbReference type="InterPro" id="IPR014038">
    <property type="entry name" value="EF1B_bsu/dsu_GNE"/>
</dbReference>
<dbReference type="InterPro" id="IPR014717">
    <property type="entry name" value="Transl_elong_EF1B/ribsomal_bS6"/>
</dbReference>
<dbReference type="InterPro" id="IPR004542">
    <property type="entry name" value="Transl_elong_EF1B_B_arc"/>
</dbReference>
<dbReference type="PANTHER" id="PTHR39647">
    <property type="entry name" value="ELONGATION FACTOR 1-BETA"/>
    <property type="match status" value="1"/>
</dbReference>
<dbReference type="PANTHER" id="PTHR39647:SF1">
    <property type="entry name" value="ELONGATION FACTOR 1-BETA"/>
    <property type="match status" value="1"/>
</dbReference>
<dbReference type="Pfam" id="PF00736">
    <property type="entry name" value="EF1_GNE"/>
    <property type="match status" value="1"/>
</dbReference>
<dbReference type="SMART" id="SM00888">
    <property type="entry name" value="EF1_GNE"/>
    <property type="match status" value="1"/>
</dbReference>
<dbReference type="SUPFAM" id="SSF54984">
    <property type="entry name" value="eEF-1beta-like"/>
    <property type="match status" value="1"/>
</dbReference>
<sequence length="92" mass="10025">MIAMARILAIYRVLLDGSISSDEAIQRIRKELEDKGFKLEGYDENPIGFGIVALNLKITAPEEDGITDAISSVLEELEGVSSVELDMVSRVG</sequence>
<name>EF1B_KORCO</name>
<proteinExistence type="inferred from homology"/>
<organism>
    <name type="scientific">Korarchaeum cryptofilum (strain OPF8)</name>
    <dbReference type="NCBI Taxonomy" id="374847"/>
    <lineage>
        <taxon>Archaea</taxon>
        <taxon>Thermoproteota</taxon>
        <taxon>Candidatus Korarchaeia</taxon>
        <taxon>Candidatus Korarchaeales</taxon>
        <taxon>Candidatus Korarchaeaceae</taxon>
        <taxon>Candidatus Korarchaeum</taxon>
    </lineage>
</organism>
<accession>B1L6R7</accession>
<comment type="function">
    <text evidence="1">Promotes the exchange of GDP for GTP in EF-1-alpha/GDP, thus allowing the regeneration of EF-1-alpha/GTP that could then be used to form the ternary complex EF-1-alpha/GTP/AAtRNA.</text>
</comment>
<comment type="similarity">
    <text evidence="1">Belongs to the EF-1-beta/EF-1-delta family.</text>
</comment>